<evidence type="ECO:0000255" key="1">
    <source>
        <dbReference type="PROSITE-ProRule" id="PRU00434"/>
    </source>
</evidence>
<evidence type="ECO:0000269" key="2">
    <source>
    </source>
</evidence>
<evidence type="ECO:0000269" key="3">
    <source>
    </source>
</evidence>
<evidence type="ECO:0000305" key="4"/>
<evidence type="ECO:0000312" key="5">
    <source>
        <dbReference type="EMBL" id="CAM62436.1"/>
    </source>
</evidence>
<comment type="function">
    <text evidence="2 3">Exhibits ATP hydrolysis activity and contributes to macrolide resistance by ribosome protection (PubMed:34097497). Can also hydrolyze GTP, TTP and CTP but to a lesser extent than ATP (PubMed:34097497). In vitro, rescues the transcription and translation activities affected by macrolides (PubMed:34097497). Increased expression correlates with increased resistance to clarithromycin, one of the main drugs used to treat M.abscessus (PubMed:32104016).</text>
</comment>
<comment type="catalytic activity">
    <reaction evidence="3">
        <text>ATP + H2O = ADP + phosphate + H(+)</text>
        <dbReference type="Rhea" id="RHEA:13065"/>
        <dbReference type="ChEBI" id="CHEBI:15377"/>
        <dbReference type="ChEBI" id="CHEBI:15378"/>
        <dbReference type="ChEBI" id="CHEBI:30616"/>
        <dbReference type="ChEBI" id="CHEBI:43474"/>
        <dbReference type="ChEBI" id="CHEBI:456216"/>
    </reaction>
</comment>
<comment type="activity regulation">
    <text evidence="3">The ATPase activity can be inhibited by ribosome-targeting antibiotics.</text>
</comment>
<comment type="induction">
    <text evidence="3">Expression is up-regulated more significantly after exposure to macrolides (erythromycin, azithromycin and clarithromycin) than after exposure to other ribosome-targeting antibiotics.</text>
</comment>
<comment type="disruption phenotype">
    <text evidence="3">Deletion of the gene results in increased sensitivity to macrolides.</text>
</comment>
<comment type="similarity">
    <text evidence="4">Belongs to the ABC transporter superfamily. ABCF family.</text>
</comment>
<accession>B1MB15</accession>
<name>M2355_MYCA9</name>
<dbReference type="EC" id="3.6.1.-" evidence="3"/>
<dbReference type="EMBL" id="CU458896">
    <property type="protein sequence ID" value="CAM62436.1"/>
    <property type="molecule type" value="Genomic_DNA"/>
</dbReference>
<dbReference type="RefSeq" id="WP_005114333.1">
    <property type="nucleotide sequence ID" value="NZ_MLCG01000006.1"/>
</dbReference>
<dbReference type="SMR" id="B1MB15"/>
<dbReference type="GeneID" id="93379293"/>
<dbReference type="KEGG" id="mab:MAB_2355c"/>
<dbReference type="Proteomes" id="UP000007137">
    <property type="component" value="Chromosome"/>
</dbReference>
<dbReference type="GO" id="GO:0005524">
    <property type="term" value="F:ATP binding"/>
    <property type="evidence" value="ECO:0007669"/>
    <property type="project" value="UniProtKB-KW"/>
</dbReference>
<dbReference type="GO" id="GO:0016887">
    <property type="term" value="F:ATP hydrolysis activity"/>
    <property type="evidence" value="ECO:0007669"/>
    <property type="project" value="InterPro"/>
</dbReference>
<dbReference type="GO" id="GO:0046677">
    <property type="term" value="P:response to antibiotic"/>
    <property type="evidence" value="ECO:0007669"/>
    <property type="project" value="UniProtKB-KW"/>
</dbReference>
<dbReference type="CDD" id="cd03221">
    <property type="entry name" value="ABCF_EF-3"/>
    <property type="match status" value="1"/>
</dbReference>
<dbReference type="FunFam" id="3.40.50.300:FF:000011">
    <property type="entry name" value="Putative ABC transporter ATP-binding component"/>
    <property type="match status" value="1"/>
</dbReference>
<dbReference type="Gene3D" id="3.40.50.300">
    <property type="entry name" value="P-loop containing nucleotide triphosphate hydrolases"/>
    <property type="match status" value="2"/>
</dbReference>
<dbReference type="InterPro" id="IPR003593">
    <property type="entry name" value="AAA+_ATPase"/>
</dbReference>
<dbReference type="InterPro" id="IPR003439">
    <property type="entry name" value="ABC_transporter-like_ATP-bd"/>
</dbReference>
<dbReference type="InterPro" id="IPR050611">
    <property type="entry name" value="ABCF_EF3_subfamily"/>
</dbReference>
<dbReference type="InterPro" id="IPR027417">
    <property type="entry name" value="P-loop_NTPase"/>
</dbReference>
<dbReference type="PANTHER" id="PTHR19211:SF69">
    <property type="entry name" value="ATP-BINDING PROTEIN UUP"/>
    <property type="match status" value="1"/>
</dbReference>
<dbReference type="PANTHER" id="PTHR19211">
    <property type="entry name" value="ATP-BINDING TRANSPORT PROTEIN-RELATED"/>
    <property type="match status" value="1"/>
</dbReference>
<dbReference type="Pfam" id="PF00005">
    <property type="entry name" value="ABC_tran"/>
    <property type="match status" value="2"/>
</dbReference>
<dbReference type="SMART" id="SM00382">
    <property type="entry name" value="AAA"/>
    <property type="match status" value="2"/>
</dbReference>
<dbReference type="SUPFAM" id="SSF52540">
    <property type="entry name" value="P-loop containing nucleoside triphosphate hydrolases"/>
    <property type="match status" value="2"/>
</dbReference>
<dbReference type="PROSITE" id="PS50893">
    <property type="entry name" value="ABC_TRANSPORTER_2"/>
    <property type="match status" value="2"/>
</dbReference>
<proteinExistence type="evidence at protein level"/>
<sequence length="552" mass="61173">MSHVQLDAIGYHLPDGRALLHDVSLRVGEGSKTALIGPNGTGKTTLLRIIAGDADPHDGAVTRGGQLGVMRQFIGSVRDDSTVRDLLLSVAPDRIRRAAEHLDRAELALMECDSEQDQIKYAQALADWADVGGYEFETQCDVHTTAALGIPYELARFRGVNTLSGGQQKRLVLESLLGGPHQVLLLDEPDNYLDVPAKRWLEERLVESPKTILFVSHDRELINRAAGQIATLEPTRAGSTLWVHPGSFTTYHQARADRNAKLAELRRRWDEQRAALRDLVLMYRQKAAYNSDMASRLQAAETRLRRFDEAGPPEAVPLRQNVRMRLAGGRTAKRAVIADNLELTGLTRPFDTELWYGDRVAVLGGNGTGKSHFLRLLACGGTDPELDQLPVGDMIPEPVNHDGRLRLGARVRPGWFAQTHHHAGLMDRTLLDILHHGDERRAGHGREQASRILDRYGLAPSAEQTFSSLSGGQQGRFQILLLELMGSTLLLLDEPTDNLDLHSAEALEDALAAFDGTVIAVTHDRWFARTFTRFLIFGEDGKVRESVEPQWV</sequence>
<gene>
    <name evidence="5" type="ordered locus">MAB_2355c</name>
</gene>
<organism>
    <name type="scientific">Mycobacteroides abscessus (strain ATCC 19977 / DSM 44196 / CCUG 20993 / CIP 104536 / JCM 13569 / NCTC 13031 / TMC 1543 / L948)</name>
    <name type="common">Mycobacterium abscessus</name>
    <dbReference type="NCBI Taxonomy" id="561007"/>
    <lineage>
        <taxon>Bacteria</taxon>
        <taxon>Bacillati</taxon>
        <taxon>Actinomycetota</taxon>
        <taxon>Actinomycetes</taxon>
        <taxon>Mycobacteriales</taxon>
        <taxon>Mycobacteriaceae</taxon>
        <taxon>Mycobacteroides</taxon>
        <taxon>Mycobacteroides abscessus</taxon>
    </lineage>
</organism>
<feature type="chain" id="PRO_0000461136" description="Antibiotic resistance protein MAB_2355c">
    <location>
        <begin position="1"/>
        <end position="552"/>
    </location>
</feature>
<feature type="domain" description="ABC transporter 1" evidence="1">
    <location>
        <begin position="4"/>
        <end position="270"/>
    </location>
</feature>
<feature type="domain" description="ABC transporter 2" evidence="1">
    <location>
        <begin position="332"/>
        <end position="552"/>
    </location>
</feature>
<feature type="binding site" evidence="1">
    <location>
        <begin position="37"/>
        <end position="44"/>
    </location>
    <ligand>
        <name>ATP</name>
        <dbReference type="ChEBI" id="CHEBI:30616"/>
    </ligand>
</feature>
<feature type="binding site" evidence="1">
    <location>
        <begin position="364"/>
        <end position="371"/>
    </location>
    <ligand>
        <name>ATP</name>
        <dbReference type="ChEBI" id="CHEBI:30616"/>
    </ligand>
</feature>
<protein>
    <recommendedName>
        <fullName evidence="4">Antibiotic resistance protein MAB_2355c</fullName>
        <ecNumber evidence="3">3.6.1.-</ecNumber>
    </recommendedName>
</protein>
<reference key="1">
    <citation type="journal article" date="2009" name="PLoS ONE">
        <title>Non mycobacterial virulence genes in the genome of the emerging pathogen Mycobacterium abscessus.</title>
        <authorList>
            <person name="Ripoll F."/>
            <person name="Pasek S."/>
            <person name="Schenowitz C."/>
            <person name="Dossat C."/>
            <person name="Barbe V."/>
            <person name="Rottman M."/>
            <person name="Macheras E."/>
            <person name="Heym B."/>
            <person name="Herrmann J.L."/>
            <person name="Daffe M."/>
            <person name="Brosch R."/>
            <person name="Risler J.L."/>
            <person name="Gaillard J.L."/>
        </authorList>
    </citation>
    <scope>NUCLEOTIDE SEQUENCE [LARGE SCALE GENOMIC DNA]</scope>
    <source>
        <strain>ATCC 19977 / DSM 44196 / CCUG 20993 / CIP 104536 / JCM 13569 / NCTC 13031 / TMC 1543 / L948</strain>
    </source>
</reference>
<reference key="2">
    <citation type="journal article" date="2020" name="Infect. Drug Resist.">
        <title>Efflux Pumps Contribute to Intrinsic Clarithromycin Resistance in Clinical, Mycobacterium abscessus Isolates.</title>
        <authorList>
            <person name="Guo Q."/>
            <person name="Chen J."/>
            <person name="Zhang S."/>
            <person name="Zou Y."/>
            <person name="Zhang Y."/>
            <person name="Huang D."/>
            <person name="Zhang Z."/>
            <person name="Li B."/>
            <person name="Chu H."/>
        </authorList>
    </citation>
    <scope>FUNCTION IN CLARITHROMYCIN RESISTANCE</scope>
</reference>
<reference key="3">
    <citation type="journal article" date="2021" name="Antimicrob. Agents Chemother.">
        <title>MAB_2355c Confers Macrolide Resistance in Mycobacterium abscessus by Ribosome Protection.</title>
        <authorList>
            <person name="Guo Q."/>
            <person name="Zhang Y."/>
            <person name="Fan J."/>
            <person name="Zhang H."/>
            <person name="Zhang Z."/>
            <person name="Li B."/>
            <person name="Chu H."/>
        </authorList>
    </citation>
    <scope>FUNCTION</scope>
    <scope>CATALYTIC ACTIVITY</scope>
    <scope>ACTIVITY REGULATION</scope>
    <scope>INDUCTION</scope>
    <scope>DISRUPTION PHENOTYPE</scope>
    <source>
        <strain>ATCC 19977 / DSM 44196 / CCUG 20993 / CIP 104536 / JCM 13569 / NCTC 13031 / TMC 1543 / L948</strain>
    </source>
</reference>
<keyword id="KW-0046">Antibiotic resistance</keyword>
<keyword id="KW-0067">ATP-binding</keyword>
<keyword id="KW-0378">Hydrolase</keyword>
<keyword id="KW-0547">Nucleotide-binding</keyword>
<keyword id="KW-1185">Reference proteome</keyword>
<keyword id="KW-0677">Repeat</keyword>